<name>MPH1_PICST</name>
<organism>
    <name type="scientific">Scheffersomyces stipitis (strain ATCC 58785 / CBS 6054 / NBRC 10063 / NRRL Y-11545)</name>
    <name type="common">Yeast</name>
    <name type="synonym">Pichia stipitis</name>
    <dbReference type="NCBI Taxonomy" id="322104"/>
    <lineage>
        <taxon>Eukaryota</taxon>
        <taxon>Fungi</taxon>
        <taxon>Dikarya</taxon>
        <taxon>Ascomycota</taxon>
        <taxon>Saccharomycotina</taxon>
        <taxon>Pichiomycetes</taxon>
        <taxon>Debaryomycetaceae</taxon>
        <taxon>Scheffersomyces</taxon>
    </lineage>
</organism>
<protein>
    <recommendedName>
        <fullName evidence="1">ATP-dependent DNA helicase MPH1</fullName>
        <ecNumber evidence="1 2">3.6.4.12</ecNumber>
    </recommendedName>
    <alternativeName>
        <fullName evidence="2">FANCM-like protein 1</fullName>
    </alternativeName>
</protein>
<comment type="function">
    <text evidence="2">ATP-dependent DNA helicase involved in DNA damage repair by homologous recombination and in genome maintenance. Capable of unwinding D-loops. Plays a role in limiting crossover recombinants during mitotic DNA double-strand break (DSB) repair. Component of a FANCM-MHF complex which promotes gene conversion at blocked replication forks, probably by reversal of the stalled fork.</text>
</comment>
<comment type="catalytic activity">
    <reaction evidence="2">
        <text>ATP + H2O = ADP + phosphate + H(+)</text>
        <dbReference type="Rhea" id="RHEA:13065"/>
        <dbReference type="ChEBI" id="CHEBI:15377"/>
        <dbReference type="ChEBI" id="CHEBI:15378"/>
        <dbReference type="ChEBI" id="CHEBI:30616"/>
        <dbReference type="ChEBI" id="CHEBI:43474"/>
        <dbReference type="ChEBI" id="CHEBI:456216"/>
        <dbReference type="EC" id="3.6.4.12"/>
    </reaction>
</comment>
<comment type="subunit">
    <text evidence="2">Interacts with the MHF histone-fold complex to form the FANCM-MHF complex.</text>
</comment>
<comment type="subcellular location">
    <subcellularLocation>
        <location evidence="1">Nucleus</location>
    </subcellularLocation>
</comment>
<comment type="similarity">
    <text evidence="6">Belongs to the DEAD box helicase family. DEAH subfamily. FANCM sub-subfamily.</text>
</comment>
<comment type="sequence caution" evidence="6">
    <conflict type="erroneous gene model prediction">
        <sequence resource="EMBL-CDS" id="EAZ63005"/>
    </conflict>
</comment>
<reference key="1">
    <citation type="journal article" date="2007" name="Nat. Biotechnol.">
        <title>Genome sequence of the lignocellulose-bioconverting and xylose-fermenting yeast Pichia stipitis.</title>
        <authorList>
            <person name="Jeffries T.W."/>
            <person name="Grigoriev I.V."/>
            <person name="Grimwood J."/>
            <person name="Laplaza J.M."/>
            <person name="Aerts A."/>
            <person name="Salamov A."/>
            <person name="Schmutz J."/>
            <person name="Lindquist E."/>
            <person name="Dehal P."/>
            <person name="Shapiro H."/>
            <person name="Jin Y.-S."/>
            <person name="Passoth V."/>
            <person name="Richardson P.M."/>
        </authorList>
    </citation>
    <scope>NUCLEOTIDE SEQUENCE [LARGE SCALE GENOMIC DNA]</scope>
    <source>
        <strain>ATCC 58785 / CBS 6054 / NBRC 10063 / NRRL Y-11545</strain>
    </source>
</reference>
<sequence>MPIDSDDNVFDDDDDFIELLQDSSNQTSNVTNEIATDSTNSTNTRLVVPNNRLLEEIPVPKRILLGPTHHKIDYGNLDKYVYPSNFEVRDYQFNIVQRAFYHNLLVALPTGLGKTFIASTVMLNFLRWFPESKMIFVAPTKPLVAQQIKACCSITGIPSSKVAILLDKTRKNRGEIWDEKQVFFTTPQVVENDLASGLVDPKTIALLVIDEAHRAKGNYAYNNIVKFMDRFTNSYRILALTATPASDVDGVQEIIDNLNISKVEVRSEESIDIIKYMKRKRIIRRNIYQSDEIKECIDLLCTAIAPVLKVANGKGILEITDPSRINFFQCMDASRKIVANPTIPEGTKWSNFFTLQLLGVVGQCFRRLNVYGLRSFFSYFNEKYTEFMAKHSKKKSSNKLNADFYFSEPIKQLMKRIRTMIDDPKVFSHPKIEAMMEELDEFFTINNATDSKVIIFTEFRESALEIVRFIEKVGKNLKPHIFIGQAKERDKFDESNFGKKSKGKRVGKKQQDDSKSSSENAQINGMNQKLQKEIIKNFKQGTYNILVATSIGEEGLDIGEVDLIICYDSTSSPIKNIQRMGRTGRKRDGKVVLLFSSNEESKFDKAMNGYEYIQQHIMKGQLIDLKEQNRMIPKDWEPKVEMRFIEIPEENHELQVVDDEDEIIRIATQYMMGGKSKKKKAAASKKGKTKEKRAKQFFMPDNVEIGFRSVTSMVRAVGSSKSLEEEKKEEKVRDVLDRIVDSDSDEEIPLGSIPIPRSEVIAHKQSTTDEQLLERDCQSGSNISDRTLDQHHSASEERGINSNFSHESNLPTPPENSPPKRKSIVLEEARIAKKKHKKSLGIRKPTIRPPSIIDQLKKQKSKIIRPDSANETICLDEDDILLPEYTNITEKEVTVQEDRREIEHDDDSEIFDDGLDEQLAMIDDMNTTKSFVEPTRIDFKDEVFKNDFDEHEGFLNNDELMELHTSYFTAIDPMDKVFYYDPSSSVHVDGANREYAFYGKIGHSKRSQVLIGLQKRAHEMAAKSKQSKTATPSEPETFQNYLDSDFIALQ</sequence>
<gene>
    <name evidence="1" type="primary">MPH1</name>
    <name type="ORF">PICST_53391</name>
</gene>
<accession>A3GH78</accession>
<dbReference type="EC" id="3.6.4.12" evidence="1 2"/>
<dbReference type="EMBL" id="AAVQ01000002">
    <property type="protein sequence ID" value="EAZ63005.2"/>
    <property type="status" value="ALT_SEQ"/>
    <property type="molecule type" value="Genomic_DNA"/>
</dbReference>
<dbReference type="RefSeq" id="XP_001387028.2">
    <property type="nucleotide sequence ID" value="XM_001386991.1"/>
</dbReference>
<dbReference type="SMR" id="A3GH78"/>
<dbReference type="FunCoup" id="A3GH78">
    <property type="interactions" value="236"/>
</dbReference>
<dbReference type="STRING" id="322104.A3GH78"/>
<dbReference type="GeneID" id="4851627"/>
<dbReference type="KEGG" id="pic:PICST_53391"/>
<dbReference type="eggNOG" id="KOG0354">
    <property type="taxonomic scope" value="Eukaryota"/>
</dbReference>
<dbReference type="HOGENOM" id="CLU_002513_1_0_1"/>
<dbReference type="InParanoid" id="A3GH78"/>
<dbReference type="OrthoDB" id="164902at2759"/>
<dbReference type="Proteomes" id="UP000002258">
    <property type="component" value="Chromosome 1"/>
</dbReference>
<dbReference type="GO" id="GO:0005634">
    <property type="term" value="C:nucleus"/>
    <property type="evidence" value="ECO:0007669"/>
    <property type="project" value="UniProtKB-SubCell"/>
</dbReference>
<dbReference type="GO" id="GO:0043138">
    <property type="term" value="F:3'-5' DNA helicase activity"/>
    <property type="evidence" value="ECO:0007669"/>
    <property type="project" value="InterPro"/>
</dbReference>
<dbReference type="GO" id="GO:0005524">
    <property type="term" value="F:ATP binding"/>
    <property type="evidence" value="ECO:0007669"/>
    <property type="project" value="UniProtKB-KW"/>
</dbReference>
<dbReference type="GO" id="GO:0016887">
    <property type="term" value="F:ATP hydrolysis activity"/>
    <property type="evidence" value="ECO:0007669"/>
    <property type="project" value="RHEA"/>
</dbReference>
<dbReference type="GO" id="GO:0000400">
    <property type="term" value="F:four-way junction DNA binding"/>
    <property type="evidence" value="ECO:0007669"/>
    <property type="project" value="TreeGrafter"/>
</dbReference>
<dbReference type="GO" id="GO:0009378">
    <property type="term" value="F:four-way junction helicase activity"/>
    <property type="evidence" value="ECO:0007669"/>
    <property type="project" value="TreeGrafter"/>
</dbReference>
<dbReference type="GO" id="GO:0045003">
    <property type="term" value="P:double-strand break repair via synthesis-dependent strand annealing"/>
    <property type="evidence" value="ECO:0007669"/>
    <property type="project" value="TreeGrafter"/>
</dbReference>
<dbReference type="GO" id="GO:0036297">
    <property type="term" value="P:interstrand cross-link repair"/>
    <property type="evidence" value="ECO:0007669"/>
    <property type="project" value="TreeGrafter"/>
</dbReference>
<dbReference type="CDD" id="cd18033">
    <property type="entry name" value="DEXDc_FANCM"/>
    <property type="match status" value="1"/>
</dbReference>
<dbReference type="CDD" id="cd12091">
    <property type="entry name" value="FANCM_ID"/>
    <property type="match status" value="1"/>
</dbReference>
<dbReference type="FunFam" id="3.40.50.300:FF:000861">
    <property type="entry name" value="Fanconi anemia, complementation group M"/>
    <property type="match status" value="1"/>
</dbReference>
<dbReference type="Gene3D" id="3.40.50.300">
    <property type="entry name" value="P-loop containing nucleotide triphosphate hydrolases"/>
    <property type="match status" value="2"/>
</dbReference>
<dbReference type="InterPro" id="IPR039686">
    <property type="entry name" value="FANCM/Mph1-like_ID"/>
</dbReference>
<dbReference type="InterPro" id="IPR044749">
    <property type="entry name" value="FANCM_DEXDc"/>
</dbReference>
<dbReference type="InterPro" id="IPR006935">
    <property type="entry name" value="Helicase/UvrB_N"/>
</dbReference>
<dbReference type="InterPro" id="IPR014001">
    <property type="entry name" value="Helicase_ATP-bd"/>
</dbReference>
<dbReference type="InterPro" id="IPR001650">
    <property type="entry name" value="Helicase_C-like"/>
</dbReference>
<dbReference type="InterPro" id="IPR027417">
    <property type="entry name" value="P-loop_NTPase"/>
</dbReference>
<dbReference type="PANTHER" id="PTHR14025">
    <property type="entry name" value="FANCONI ANEMIA GROUP M FANCM FAMILY MEMBER"/>
    <property type="match status" value="1"/>
</dbReference>
<dbReference type="PANTHER" id="PTHR14025:SF20">
    <property type="entry name" value="FANCONI ANEMIA GROUP M PROTEIN"/>
    <property type="match status" value="1"/>
</dbReference>
<dbReference type="Pfam" id="PF00271">
    <property type="entry name" value="Helicase_C"/>
    <property type="match status" value="1"/>
</dbReference>
<dbReference type="Pfam" id="PF04851">
    <property type="entry name" value="ResIII"/>
    <property type="match status" value="1"/>
</dbReference>
<dbReference type="SMART" id="SM00487">
    <property type="entry name" value="DEXDc"/>
    <property type="match status" value="1"/>
</dbReference>
<dbReference type="SMART" id="SM00490">
    <property type="entry name" value="HELICc"/>
    <property type="match status" value="1"/>
</dbReference>
<dbReference type="SUPFAM" id="SSF52540">
    <property type="entry name" value="P-loop containing nucleoside triphosphate hydrolases"/>
    <property type="match status" value="1"/>
</dbReference>
<dbReference type="PROSITE" id="PS00690">
    <property type="entry name" value="DEAH_ATP_HELICASE"/>
    <property type="match status" value="1"/>
</dbReference>
<dbReference type="PROSITE" id="PS51192">
    <property type="entry name" value="HELICASE_ATP_BIND_1"/>
    <property type="match status" value="1"/>
</dbReference>
<dbReference type="PROSITE" id="PS51194">
    <property type="entry name" value="HELICASE_CTER"/>
    <property type="match status" value="1"/>
</dbReference>
<proteinExistence type="inferred from homology"/>
<feature type="chain" id="PRO_0000333379" description="ATP-dependent DNA helicase MPH1">
    <location>
        <begin position="1"/>
        <end position="1050"/>
    </location>
</feature>
<feature type="domain" description="Helicase ATP-binding" evidence="3">
    <location>
        <begin position="95"/>
        <end position="262"/>
    </location>
</feature>
<feature type="domain" description="Helicase C-terminal" evidence="4">
    <location>
        <begin position="431"/>
        <end position="631"/>
    </location>
</feature>
<feature type="region of interest" description="Disordered" evidence="5">
    <location>
        <begin position="493"/>
        <end position="524"/>
    </location>
</feature>
<feature type="region of interest" description="Disordered" evidence="5">
    <location>
        <begin position="743"/>
        <end position="821"/>
    </location>
</feature>
<feature type="short sequence motif" description="DEAH box" evidence="3">
    <location>
        <begin position="210"/>
        <end position="213"/>
    </location>
</feature>
<feature type="compositionally biased region" description="Basic residues" evidence="5">
    <location>
        <begin position="499"/>
        <end position="508"/>
    </location>
</feature>
<feature type="compositionally biased region" description="Basic and acidic residues" evidence="5">
    <location>
        <begin position="786"/>
        <end position="799"/>
    </location>
</feature>
<feature type="compositionally biased region" description="Polar residues" evidence="5">
    <location>
        <begin position="800"/>
        <end position="810"/>
    </location>
</feature>
<feature type="binding site" evidence="3">
    <location>
        <begin position="108"/>
        <end position="115"/>
    </location>
    <ligand>
        <name>ATP</name>
        <dbReference type="ChEBI" id="CHEBI:30616"/>
    </ligand>
</feature>
<keyword id="KW-0067">ATP-binding</keyword>
<keyword id="KW-0227">DNA damage</keyword>
<keyword id="KW-0234">DNA repair</keyword>
<keyword id="KW-0238">DNA-binding</keyword>
<keyword id="KW-0347">Helicase</keyword>
<keyword id="KW-0378">Hydrolase</keyword>
<keyword id="KW-0547">Nucleotide-binding</keyword>
<keyword id="KW-0539">Nucleus</keyword>
<keyword id="KW-1185">Reference proteome</keyword>
<evidence type="ECO:0000250" key="1">
    <source>
        <dbReference type="UniProtKB" id="P40562"/>
    </source>
</evidence>
<evidence type="ECO:0000250" key="2">
    <source>
        <dbReference type="UniProtKB" id="Q9UT23"/>
    </source>
</evidence>
<evidence type="ECO:0000255" key="3">
    <source>
        <dbReference type="PROSITE-ProRule" id="PRU00541"/>
    </source>
</evidence>
<evidence type="ECO:0000255" key="4">
    <source>
        <dbReference type="PROSITE-ProRule" id="PRU00542"/>
    </source>
</evidence>
<evidence type="ECO:0000256" key="5">
    <source>
        <dbReference type="SAM" id="MobiDB-lite"/>
    </source>
</evidence>
<evidence type="ECO:0000305" key="6"/>